<gene>
    <name evidence="1" type="primary">rpmF</name>
    <name type="ordered locus">SGR_1909</name>
</gene>
<sequence length="57" mass="6596">MAVPKRKMSRSNTRHRRSQWKAAVPTLVSCERCQEPKLQHIACPSCGTYNKRQVLEV</sequence>
<feature type="chain" id="PRO_1000120175" description="Large ribosomal subunit protein bL32">
    <location>
        <begin position="1"/>
        <end position="57"/>
    </location>
</feature>
<reference key="1">
    <citation type="journal article" date="2008" name="J. Bacteriol.">
        <title>Genome sequence of the streptomycin-producing microorganism Streptomyces griseus IFO 13350.</title>
        <authorList>
            <person name="Ohnishi Y."/>
            <person name="Ishikawa J."/>
            <person name="Hara H."/>
            <person name="Suzuki H."/>
            <person name="Ikenoya M."/>
            <person name="Ikeda H."/>
            <person name="Yamashita A."/>
            <person name="Hattori M."/>
            <person name="Horinouchi S."/>
        </authorList>
    </citation>
    <scope>NUCLEOTIDE SEQUENCE [LARGE SCALE GENOMIC DNA]</scope>
    <source>
        <strain>JCM 4626 / CBS 651.72 / NBRC 13350 / KCC S-0626 / ISP 5235</strain>
    </source>
</reference>
<organism>
    <name type="scientific">Streptomyces griseus subsp. griseus (strain JCM 4626 / CBS 651.72 / NBRC 13350 / KCC S-0626 / ISP 5235)</name>
    <dbReference type="NCBI Taxonomy" id="455632"/>
    <lineage>
        <taxon>Bacteria</taxon>
        <taxon>Bacillati</taxon>
        <taxon>Actinomycetota</taxon>
        <taxon>Actinomycetes</taxon>
        <taxon>Kitasatosporales</taxon>
        <taxon>Streptomycetaceae</taxon>
        <taxon>Streptomyces</taxon>
    </lineage>
</organism>
<name>RL32_STRGG</name>
<keyword id="KW-0687">Ribonucleoprotein</keyword>
<keyword id="KW-0689">Ribosomal protein</keyword>
<evidence type="ECO:0000255" key="1">
    <source>
        <dbReference type="HAMAP-Rule" id="MF_00340"/>
    </source>
</evidence>
<evidence type="ECO:0000305" key="2"/>
<protein>
    <recommendedName>
        <fullName evidence="1">Large ribosomal subunit protein bL32</fullName>
    </recommendedName>
    <alternativeName>
        <fullName evidence="2">50S ribosomal protein L32</fullName>
    </alternativeName>
</protein>
<accession>B1VYY3</accession>
<comment type="similarity">
    <text evidence="1">Belongs to the bacterial ribosomal protein bL32 family.</text>
</comment>
<dbReference type="EMBL" id="AP009493">
    <property type="protein sequence ID" value="BAG18738.1"/>
    <property type="molecule type" value="Genomic_DNA"/>
</dbReference>
<dbReference type="RefSeq" id="WP_003965982.1">
    <property type="nucleotide sequence ID" value="NC_010572.1"/>
</dbReference>
<dbReference type="SMR" id="B1VYY3"/>
<dbReference type="GeneID" id="97761294"/>
<dbReference type="KEGG" id="sgr:SGR_1909"/>
<dbReference type="eggNOG" id="COG0333">
    <property type="taxonomic scope" value="Bacteria"/>
</dbReference>
<dbReference type="HOGENOM" id="CLU_129084_1_1_11"/>
<dbReference type="Proteomes" id="UP000001685">
    <property type="component" value="Chromosome"/>
</dbReference>
<dbReference type="GO" id="GO:0015934">
    <property type="term" value="C:large ribosomal subunit"/>
    <property type="evidence" value="ECO:0007669"/>
    <property type="project" value="InterPro"/>
</dbReference>
<dbReference type="GO" id="GO:0003735">
    <property type="term" value="F:structural constituent of ribosome"/>
    <property type="evidence" value="ECO:0007669"/>
    <property type="project" value="InterPro"/>
</dbReference>
<dbReference type="GO" id="GO:0006412">
    <property type="term" value="P:translation"/>
    <property type="evidence" value="ECO:0007669"/>
    <property type="project" value="UniProtKB-UniRule"/>
</dbReference>
<dbReference type="HAMAP" id="MF_00340">
    <property type="entry name" value="Ribosomal_bL32"/>
    <property type="match status" value="1"/>
</dbReference>
<dbReference type="InterPro" id="IPR002677">
    <property type="entry name" value="Ribosomal_bL32"/>
</dbReference>
<dbReference type="InterPro" id="IPR044957">
    <property type="entry name" value="Ribosomal_bL32_bact"/>
</dbReference>
<dbReference type="InterPro" id="IPR011332">
    <property type="entry name" value="Ribosomal_zn-bd"/>
</dbReference>
<dbReference type="NCBIfam" id="TIGR01031">
    <property type="entry name" value="rpmF_bact"/>
    <property type="match status" value="1"/>
</dbReference>
<dbReference type="PANTHER" id="PTHR35534">
    <property type="entry name" value="50S RIBOSOMAL PROTEIN L32"/>
    <property type="match status" value="1"/>
</dbReference>
<dbReference type="PANTHER" id="PTHR35534:SF1">
    <property type="entry name" value="LARGE RIBOSOMAL SUBUNIT PROTEIN BL32"/>
    <property type="match status" value="1"/>
</dbReference>
<dbReference type="Pfam" id="PF01783">
    <property type="entry name" value="Ribosomal_L32p"/>
    <property type="match status" value="1"/>
</dbReference>
<dbReference type="SUPFAM" id="SSF57829">
    <property type="entry name" value="Zn-binding ribosomal proteins"/>
    <property type="match status" value="1"/>
</dbReference>
<proteinExistence type="inferred from homology"/>